<accession>P9WLD3</accession>
<accession>L0TC44</accession>
<accession>P64985</accession>
<accession>Q50661</accession>
<dbReference type="EMBL" id="AL123456">
    <property type="protein sequence ID" value="CCP45086.1"/>
    <property type="molecule type" value="Genomic_DNA"/>
</dbReference>
<dbReference type="PIR" id="D70734">
    <property type="entry name" value="D70734"/>
</dbReference>
<dbReference type="RefSeq" id="NP_216820.1">
    <property type="nucleotide sequence ID" value="NC_000962.3"/>
</dbReference>
<dbReference type="RefSeq" id="WP_003411870.1">
    <property type="nucleotide sequence ID" value="NZ_NVQJ01000012.1"/>
</dbReference>
<dbReference type="STRING" id="83332.Rv2304c"/>
<dbReference type="PaxDb" id="83332-Rv2304c"/>
<dbReference type="DNASU" id="885102"/>
<dbReference type="GeneID" id="885102"/>
<dbReference type="KEGG" id="mtu:Rv2304c"/>
<dbReference type="KEGG" id="mtv:RVBD_2304c"/>
<dbReference type="TubercuList" id="Rv2304c"/>
<dbReference type="InParanoid" id="P9WLD3"/>
<dbReference type="OrthoDB" id="9775794at2"/>
<dbReference type="Proteomes" id="UP000001584">
    <property type="component" value="Chromosome"/>
</dbReference>
<protein>
    <recommendedName>
        <fullName>Uncharacterized protein Rv2304c</fullName>
    </recommendedName>
</protein>
<feature type="chain" id="PRO_0000104013" description="Uncharacterized protein Rv2304c">
    <location>
        <begin position="1"/>
        <end position="69"/>
    </location>
</feature>
<sequence length="69" mass="7411">MSHDIATEEADDGALDRCVLCDLTGKRVDVKEATCTGRPATTFEQAFAVERDAGFDDFLHGPVGPRSTP</sequence>
<reference key="1">
    <citation type="journal article" date="1998" name="Nature">
        <title>Deciphering the biology of Mycobacterium tuberculosis from the complete genome sequence.</title>
        <authorList>
            <person name="Cole S.T."/>
            <person name="Brosch R."/>
            <person name="Parkhill J."/>
            <person name="Garnier T."/>
            <person name="Churcher C.M."/>
            <person name="Harris D.E."/>
            <person name="Gordon S.V."/>
            <person name="Eiglmeier K."/>
            <person name="Gas S."/>
            <person name="Barry C.E. III"/>
            <person name="Tekaia F."/>
            <person name="Badcock K."/>
            <person name="Basham D."/>
            <person name="Brown D."/>
            <person name="Chillingworth T."/>
            <person name="Connor R."/>
            <person name="Davies R.M."/>
            <person name="Devlin K."/>
            <person name="Feltwell T."/>
            <person name="Gentles S."/>
            <person name="Hamlin N."/>
            <person name="Holroyd S."/>
            <person name="Hornsby T."/>
            <person name="Jagels K."/>
            <person name="Krogh A."/>
            <person name="McLean J."/>
            <person name="Moule S."/>
            <person name="Murphy L.D."/>
            <person name="Oliver S."/>
            <person name="Osborne J."/>
            <person name="Quail M.A."/>
            <person name="Rajandream M.A."/>
            <person name="Rogers J."/>
            <person name="Rutter S."/>
            <person name="Seeger K."/>
            <person name="Skelton S."/>
            <person name="Squares S."/>
            <person name="Squares R."/>
            <person name="Sulston J.E."/>
            <person name="Taylor K."/>
            <person name="Whitehead S."/>
            <person name="Barrell B.G."/>
        </authorList>
    </citation>
    <scope>NUCLEOTIDE SEQUENCE [LARGE SCALE GENOMIC DNA]</scope>
    <source>
        <strain>ATCC 25618 / H37Rv</strain>
    </source>
</reference>
<proteinExistence type="predicted"/>
<organism>
    <name type="scientific">Mycobacterium tuberculosis (strain ATCC 25618 / H37Rv)</name>
    <dbReference type="NCBI Taxonomy" id="83332"/>
    <lineage>
        <taxon>Bacteria</taxon>
        <taxon>Bacillati</taxon>
        <taxon>Actinomycetota</taxon>
        <taxon>Actinomycetes</taxon>
        <taxon>Mycobacteriales</taxon>
        <taxon>Mycobacteriaceae</taxon>
        <taxon>Mycobacterium</taxon>
        <taxon>Mycobacterium tuberculosis complex</taxon>
    </lineage>
</organism>
<name>Y2304_MYCTU</name>
<keyword id="KW-1185">Reference proteome</keyword>
<gene>
    <name type="ordered locus">Rv2304c</name>
    <name type="ORF">MTCY339.05</name>
</gene>